<dbReference type="EC" id="2.3.2.27"/>
<dbReference type="EMBL" id="AAMC01003501">
    <property type="status" value="NOT_ANNOTATED_CDS"/>
    <property type="molecule type" value="Genomic_DNA"/>
</dbReference>
<dbReference type="EMBL" id="AAMC01003502">
    <property type="status" value="NOT_ANNOTATED_CDS"/>
    <property type="molecule type" value="Genomic_DNA"/>
</dbReference>
<dbReference type="EMBL" id="AAMC01003503">
    <property type="status" value="NOT_ANNOTATED_CDS"/>
    <property type="molecule type" value="Genomic_DNA"/>
</dbReference>
<dbReference type="RefSeq" id="NP_001016977.1">
    <property type="nucleotide sequence ID" value="NM_001016977.2"/>
</dbReference>
<dbReference type="SMR" id="F7EP40"/>
<dbReference type="FunCoup" id="F7EP40">
    <property type="interactions" value="1691"/>
</dbReference>
<dbReference type="STRING" id="8364.ENSXETP00000027937"/>
<dbReference type="PaxDb" id="8364-ENSXETP00000016718"/>
<dbReference type="GeneID" id="549731"/>
<dbReference type="KEGG" id="xtr:549731"/>
<dbReference type="AGR" id="Xenbase:XB-GENE-998325"/>
<dbReference type="CTD" id="84937"/>
<dbReference type="Xenbase" id="XB-GENE-998325">
    <property type="gene designation" value="znrf1"/>
</dbReference>
<dbReference type="eggNOG" id="KOG0801">
    <property type="taxonomic scope" value="Eukaryota"/>
</dbReference>
<dbReference type="HOGENOM" id="CLU_062700_0_1_1"/>
<dbReference type="InParanoid" id="F7EP40"/>
<dbReference type="OMA" id="TPYAHGN"/>
<dbReference type="OrthoDB" id="10057496at2759"/>
<dbReference type="PhylomeDB" id="F7EP40"/>
<dbReference type="TreeFam" id="TF317681"/>
<dbReference type="Reactome" id="R-XTR-983168">
    <property type="pathway name" value="Antigen processing: Ubiquitination &amp; Proteasome degradation"/>
</dbReference>
<dbReference type="UniPathway" id="UPA00143"/>
<dbReference type="Proteomes" id="UP000008143">
    <property type="component" value="Chromosome 4"/>
</dbReference>
<dbReference type="Bgee" id="ENSXETG00000007681">
    <property type="expression patterns" value="Expressed in skeletal muscle tissue and 18 other cell types or tissues"/>
</dbReference>
<dbReference type="GO" id="GO:0005768">
    <property type="term" value="C:endosome"/>
    <property type="evidence" value="ECO:0007669"/>
    <property type="project" value="UniProtKB-SubCell"/>
</dbReference>
<dbReference type="GO" id="GO:0005764">
    <property type="term" value="C:lysosome"/>
    <property type="evidence" value="ECO:0007669"/>
    <property type="project" value="UniProtKB-SubCell"/>
</dbReference>
<dbReference type="GO" id="GO:0016020">
    <property type="term" value="C:membrane"/>
    <property type="evidence" value="ECO:0007669"/>
    <property type="project" value="UniProtKB-SubCell"/>
</dbReference>
<dbReference type="GO" id="GO:0004842">
    <property type="term" value="F:ubiquitin-protein transferase activity"/>
    <property type="evidence" value="ECO:0000250"/>
    <property type="project" value="UniProtKB"/>
</dbReference>
<dbReference type="GO" id="GO:0008270">
    <property type="term" value="F:zinc ion binding"/>
    <property type="evidence" value="ECO:0007669"/>
    <property type="project" value="UniProtKB-KW"/>
</dbReference>
<dbReference type="GO" id="GO:0043161">
    <property type="term" value="P:proteasome-mediated ubiquitin-dependent protein catabolic process"/>
    <property type="evidence" value="ECO:0000250"/>
    <property type="project" value="UniProtKB"/>
</dbReference>
<dbReference type="GO" id="GO:0070936">
    <property type="term" value="P:protein K48-linked ubiquitination"/>
    <property type="evidence" value="ECO:0000250"/>
    <property type="project" value="UniProtKB"/>
</dbReference>
<dbReference type="CDD" id="cd16695">
    <property type="entry name" value="mRING-CH-C4HC2H_ZNRF2"/>
    <property type="match status" value="1"/>
</dbReference>
<dbReference type="FunFam" id="3.30.40.10:FF:000235">
    <property type="entry name" value="E3 ubiquitin-protein ligase ZNRF1"/>
    <property type="match status" value="1"/>
</dbReference>
<dbReference type="Gene3D" id="3.30.40.10">
    <property type="entry name" value="Zinc/RING finger domain, C3HC4 (zinc finger)"/>
    <property type="match status" value="1"/>
</dbReference>
<dbReference type="InterPro" id="IPR001841">
    <property type="entry name" value="Znf_RING"/>
</dbReference>
<dbReference type="InterPro" id="IPR013083">
    <property type="entry name" value="Znf_RING/FYVE/PHD"/>
</dbReference>
<dbReference type="InterPro" id="IPR051878">
    <property type="entry name" value="ZNRF_ubiq-protein_ligase"/>
</dbReference>
<dbReference type="PANTHER" id="PTHR46661:SF2">
    <property type="entry name" value="E3 UBIQUITIN-PROTEIN LIGASE ZNRF1"/>
    <property type="match status" value="1"/>
</dbReference>
<dbReference type="PANTHER" id="PTHR46661">
    <property type="entry name" value="E3 UBIQUITIN-PROTEIN LIGASE ZNRF1-LIKE PROTEIN"/>
    <property type="match status" value="1"/>
</dbReference>
<dbReference type="Pfam" id="PF13639">
    <property type="entry name" value="zf-RING_2"/>
    <property type="match status" value="1"/>
</dbReference>
<dbReference type="SUPFAM" id="SSF57850">
    <property type="entry name" value="RING/U-box"/>
    <property type="match status" value="1"/>
</dbReference>
<dbReference type="PROSITE" id="PS50089">
    <property type="entry name" value="ZF_RING_2"/>
    <property type="match status" value="1"/>
</dbReference>
<feature type="initiator methionine" description="Removed" evidence="2">
    <location>
        <position position="1"/>
    </location>
</feature>
<feature type="chain" id="PRO_0000415579" description="E3 ubiquitin-protein ligase ZNRF1">
    <location>
        <begin position="2"/>
        <end position="195"/>
    </location>
</feature>
<feature type="zinc finger region" description="RING-type; atypical" evidence="3">
    <location>
        <begin position="152"/>
        <end position="193"/>
    </location>
</feature>
<feature type="region of interest" description="Disordered" evidence="4">
    <location>
        <begin position="1"/>
        <end position="36"/>
    </location>
</feature>
<feature type="region of interest" description="Disordered" evidence="4">
    <location>
        <begin position="61"/>
        <end position="84"/>
    </location>
</feature>
<feature type="compositionally biased region" description="Polar residues" evidence="4">
    <location>
        <begin position="1"/>
        <end position="10"/>
    </location>
</feature>
<feature type="compositionally biased region" description="Low complexity" evidence="4">
    <location>
        <begin position="18"/>
        <end position="29"/>
    </location>
</feature>
<feature type="lipid moiety-binding region" description="N-myristoyl glycine" evidence="2">
    <location>
        <position position="2"/>
    </location>
</feature>
<protein>
    <recommendedName>
        <fullName>E3 ubiquitin-protein ligase ZNRF1</fullName>
        <ecNumber>2.3.2.27</ecNumber>
    </recommendedName>
    <alternativeName>
        <fullName>RING-type E3 ubiquitin transferase ZNRF1</fullName>
    </alternativeName>
    <alternativeName>
        <fullName>Zinc/RING finger protein 1</fullName>
    </alternativeName>
</protein>
<organism>
    <name type="scientific">Xenopus tropicalis</name>
    <name type="common">Western clawed frog</name>
    <name type="synonym">Silurana tropicalis</name>
    <dbReference type="NCBI Taxonomy" id="8364"/>
    <lineage>
        <taxon>Eukaryota</taxon>
        <taxon>Metazoa</taxon>
        <taxon>Chordata</taxon>
        <taxon>Craniata</taxon>
        <taxon>Vertebrata</taxon>
        <taxon>Euteleostomi</taxon>
        <taxon>Amphibia</taxon>
        <taxon>Batrachia</taxon>
        <taxon>Anura</taxon>
        <taxon>Pipoidea</taxon>
        <taxon>Pipidae</taxon>
        <taxon>Xenopodinae</taxon>
        <taxon>Xenopus</taxon>
        <taxon>Silurana</taxon>
    </lineage>
</organism>
<accession>F7EP40</accession>
<gene>
    <name type="primary">znrf1</name>
</gene>
<sequence>MGGKQSSASRSRAPFPGVSSDDSAVPPSSNFGHFRAGGAMGLRSRSVSSVSGLDPPAPGLPFGLYRAGPDTERGGSSGSEDSRGDLYLGSRASLADTLQIAPRWIGAHSGFRCPICSKSVAPDEMEMHFIMCLSKPRLSYNDDVLTRDAGECVICLEELSQGDTIARLPCLCIYHKSCIDSWFEVNRCCPEHPSD</sequence>
<proteinExistence type="inferred from homology"/>
<comment type="function">
    <text evidence="1">E3 ubiquitin-protein ligase that plays a role in neuron cells differentiation. Plays a role in the establishment and maintenance of neuronal transmission and plasticity.</text>
</comment>
<comment type="catalytic activity">
    <reaction>
        <text>S-ubiquitinyl-[E2 ubiquitin-conjugating enzyme]-L-cysteine + [acceptor protein]-L-lysine = [E2 ubiquitin-conjugating enzyme]-L-cysteine + N(6)-ubiquitinyl-[acceptor protein]-L-lysine.</text>
        <dbReference type="EC" id="2.3.2.27"/>
    </reaction>
</comment>
<comment type="pathway">
    <text>Protein modification; protein ubiquitination.</text>
</comment>
<comment type="subcellular location">
    <subcellularLocation>
        <location evidence="1">Endosome</location>
    </subcellularLocation>
    <subcellularLocation>
        <location evidence="1">Lysosome</location>
    </subcellularLocation>
    <subcellularLocation>
        <location evidence="1">Membrane</location>
        <topology evidence="1">Peripheral membrane protein</topology>
    </subcellularLocation>
</comment>
<comment type="domain">
    <text evidence="1">The RING-type zinc finger domain is required for E3 ligase activity.</text>
</comment>
<reference key="1">
    <citation type="journal article" date="2010" name="Science">
        <title>The genome of the Western clawed frog Xenopus tropicalis.</title>
        <authorList>
            <person name="Hellsten U."/>
            <person name="Harland R.M."/>
            <person name="Gilchrist M.J."/>
            <person name="Hendrix D."/>
            <person name="Jurka J."/>
            <person name="Kapitonov V."/>
            <person name="Ovcharenko I."/>
            <person name="Putnam N.H."/>
            <person name="Shu S."/>
            <person name="Taher L."/>
            <person name="Blitz I.L."/>
            <person name="Blumberg B."/>
            <person name="Dichmann D.S."/>
            <person name="Dubchak I."/>
            <person name="Amaya E."/>
            <person name="Detter J.C."/>
            <person name="Fletcher R."/>
            <person name="Gerhard D.S."/>
            <person name="Goodstein D."/>
            <person name="Graves T."/>
            <person name="Grigoriev I.V."/>
            <person name="Grimwood J."/>
            <person name="Kawashima T."/>
            <person name="Lindquist E."/>
            <person name="Lucas S.M."/>
            <person name="Mead P.E."/>
            <person name="Mitros T."/>
            <person name="Ogino H."/>
            <person name="Ohta Y."/>
            <person name="Poliakov A.V."/>
            <person name="Pollet N."/>
            <person name="Robert J."/>
            <person name="Salamov A."/>
            <person name="Sater A.K."/>
            <person name="Schmutz J."/>
            <person name="Terry A."/>
            <person name="Vize P.D."/>
            <person name="Warren W.C."/>
            <person name="Wells D."/>
            <person name="Wills A."/>
            <person name="Wilson R.K."/>
            <person name="Zimmerman L.B."/>
            <person name="Zorn A.M."/>
            <person name="Grainger R."/>
            <person name="Grammer T."/>
            <person name="Khokha M.K."/>
            <person name="Richardson P.M."/>
            <person name="Rokhsar D.S."/>
        </authorList>
    </citation>
    <scope>NUCLEOTIDE SEQUENCE [LARGE SCALE GENOMIC DNA]</scope>
</reference>
<keyword id="KW-0967">Endosome</keyword>
<keyword id="KW-0449">Lipoprotein</keyword>
<keyword id="KW-0458">Lysosome</keyword>
<keyword id="KW-0472">Membrane</keyword>
<keyword id="KW-0479">Metal-binding</keyword>
<keyword id="KW-0519">Myristate</keyword>
<keyword id="KW-1185">Reference proteome</keyword>
<keyword id="KW-0808">Transferase</keyword>
<keyword id="KW-0833">Ubl conjugation pathway</keyword>
<keyword id="KW-0862">Zinc</keyword>
<keyword id="KW-0863">Zinc-finger</keyword>
<evidence type="ECO:0000250" key="1"/>
<evidence type="ECO:0000255" key="2"/>
<evidence type="ECO:0000255" key="3">
    <source>
        <dbReference type="PROSITE-ProRule" id="PRU00175"/>
    </source>
</evidence>
<evidence type="ECO:0000256" key="4">
    <source>
        <dbReference type="SAM" id="MobiDB-lite"/>
    </source>
</evidence>
<name>ZNRF1_XENTR</name>